<evidence type="ECO:0000255" key="1">
    <source>
        <dbReference type="HAMAP-Rule" id="MF_00023"/>
    </source>
</evidence>
<feature type="chain" id="PRO_1000002134" description="SsrA-binding protein">
    <location>
        <begin position="1"/>
        <end position="158"/>
    </location>
</feature>
<organism>
    <name type="scientific">Saccharopolyspora erythraea (strain ATCC 11635 / DSM 40517 / JCM 4748 / NBRC 13426 / NCIMB 8594 / NRRL 2338)</name>
    <dbReference type="NCBI Taxonomy" id="405948"/>
    <lineage>
        <taxon>Bacteria</taxon>
        <taxon>Bacillati</taxon>
        <taxon>Actinomycetota</taxon>
        <taxon>Actinomycetes</taxon>
        <taxon>Pseudonocardiales</taxon>
        <taxon>Pseudonocardiaceae</taxon>
        <taxon>Saccharopolyspora</taxon>
    </lineage>
</organism>
<dbReference type="EMBL" id="AM420293">
    <property type="protein sequence ID" value="CAM00440.1"/>
    <property type="molecule type" value="Genomic_DNA"/>
</dbReference>
<dbReference type="RefSeq" id="WP_009946561.1">
    <property type="nucleotide sequence ID" value="NC_009142.1"/>
</dbReference>
<dbReference type="SMR" id="A4F8R5"/>
<dbReference type="STRING" id="405948.SACE_1108"/>
<dbReference type="KEGG" id="sen:SACE_1108"/>
<dbReference type="eggNOG" id="COG0691">
    <property type="taxonomic scope" value="Bacteria"/>
</dbReference>
<dbReference type="HOGENOM" id="CLU_108953_0_0_11"/>
<dbReference type="OrthoDB" id="9805462at2"/>
<dbReference type="Proteomes" id="UP000006728">
    <property type="component" value="Chromosome"/>
</dbReference>
<dbReference type="GO" id="GO:0005829">
    <property type="term" value="C:cytosol"/>
    <property type="evidence" value="ECO:0007669"/>
    <property type="project" value="TreeGrafter"/>
</dbReference>
<dbReference type="GO" id="GO:0003723">
    <property type="term" value="F:RNA binding"/>
    <property type="evidence" value="ECO:0007669"/>
    <property type="project" value="UniProtKB-UniRule"/>
</dbReference>
<dbReference type="GO" id="GO:0070929">
    <property type="term" value="P:trans-translation"/>
    <property type="evidence" value="ECO:0007669"/>
    <property type="project" value="UniProtKB-UniRule"/>
</dbReference>
<dbReference type="CDD" id="cd09294">
    <property type="entry name" value="SmpB"/>
    <property type="match status" value="1"/>
</dbReference>
<dbReference type="Gene3D" id="2.40.280.10">
    <property type="match status" value="1"/>
</dbReference>
<dbReference type="HAMAP" id="MF_00023">
    <property type="entry name" value="SmpB"/>
    <property type="match status" value="1"/>
</dbReference>
<dbReference type="InterPro" id="IPR023620">
    <property type="entry name" value="SmpB"/>
</dbReference>
<dbReference type="InterPro" id="IPR000037">
    <property type="entry name" value="SsrA-bd_prot"/>
</dbReference>
<dbReference type="InterPro" id="IPR020081">
    <property type="entry name" value="SsrA-bd_prot_CS"/>
</dbReference>
<dbReference type="NCBIfam" id="NF003843">
    <property type="entry name" value="PRK05422.1"/>
    <property type="match status" value="1"/>
</dbReference>
<dbReference type="NCBIfam" id="TIGR00086">
    <property type="entry name" value="smpB"/>
    <property type="match status" value="1"/>
</dbReference>
<dbReference type="PANTHER" id="PTHR30308:SF2">
    <property type="entry name" value="SSRA-BINDING PROTEIN"/>
    <property type="match status" value="1"/>
</dbReference>
<dbReference type="PANTHER" id="PTHR30308">
    <property type="entry name" value="TMRNA-BINDING COMPONENT OF TRANS-TRANSLATION TAGGING COMPLEX"/>
    <property type="match status" value="1"/>
</dbReference>
<dbReference type="Pfam" id="PF01668">
    <property type="entry name" value="SmpB"/>
    <property type="match status" value="1"/>
</dbReference>
<dbReference type="SUPFAM" id="SSF74982">
    <property type="entry name" value="Small protein B (SmpB)"/>
    <property type="match status" value="1"/>
</dbReference>
<dbReference type="PROSITE" id="PS01317">
    <property type="entry name" value="SSRP"/>
    <property type="match status" value="1"/>
</dbReference>
<proteinExistence type="inferred from homology"/>
<keyword id="KW-0963">Cytoplasm</keyword>
<keyword id="KW-1185">Reference proteome</keyword>
<keyword id="KW-0694">RNA-binding</keyword>
<reference key="1">
    <citation type="journal article" date="2007" name="Nat. Biotechnol.">
        <title>Complete genome sequence of the erythromycin-producing bacterium Saccharopolyspora erythraea NRRL23338.</title>
        <authorList>
            <person name="Oliynyk M."/>
            <person name="Samborskyy M."/>
            <person name="Lester J.B."/>
            <person name="Mironenko T."/>
            <person name="Scott N."/>
            <person name="Dickens S."/>
            <person name="Haydock S.F."/>
            <person name="Leadlay P.F."/>
        </authorList>
    </citation>
    <scope>NUCLEOTIDE SEQUENCE [LARGE SCALE GENOMIC DNA]</scope>
    <source>
        <strain>ATCC 11635 / DSM 40517 / JCM 4748 / NBRC 13426 / NCIMB 8594 / NRRL 2338</strain>
    </source>
</reference>
<accession>A4F8R5</accession>
<protein>
    <recommendedName>
        <fullName evidence="1">SsrA-binding protein</fullName>
    </recommendedName>
    <alternativeName>
        <fullName evidence="1">Small protein B</fullName>
    </alternativeName>
</protein>
<comment type="function">
    <text evidence="1">Required for rescue of stalled ribosomes mediated by trans-translation. Binds to transfer-messenger RNA (tmRNA), required for stable association of tmRNA with ribosomes. tmRNA and SmpB together mimic tRNA shape, replacing the anticodon stem-loop with SmpB. tmRNA is encoded by the ssrA gene; the 2 termini fold to resemble tRNA(Ala) and it encodes a 'tag peptide', a short internal open reading frame. During trans-translation Ala-aminoacylated tmRNA acts like a tRNA, entering the A-site of stalled ribosomes, displacing the stalled mRNA. The ribosome then switches to translate the ORF on the tmRNA; the nascent peptide is terminated with the 'tag peptide' encoded by the tmRNA and targeted for degradation. The ribosome is freed to recommence translation, which seems to be the essential function of trans-translation.</text>
</comment>
<comment type="subcellular location">
    <subcellularLocation>
        <location evidence="1">Cytoplasm</location>
    </subcellularLocation>
    <text evidence="1">The tmRNA-SmpB complex associates with stalled 70S ribosomes.</text>
</comment>
<comment type="similarity">
    <text evidence="1">Belongs to the SmpB family.</text>
</comment>
<sequence>MAKEQGRKLIAQNRRARHDWSVLDTYETGIVLTGTEVKSLRQGKASLVDGFATVDRGEVWLRNVHIPEYTEGTWTNHEPRRSRKLLLHKGEIIRLIGKIQESGLSLIPLSLYFSDGKAKVELALAKGKKAHDKRQDLAKKDAQREIERAMGRARKGKW</sequence>
<gene>
    <name evidence="1" type="primary">smpB</name>
    <name type="ordered locus">SACE_1108</name>
</gene>
<name>SSRP_SACEN</name>